<name>SSRP_BEII9</name>
<comment type="function">
    <text evidence="1">Required for rescue of stalled ribosomes mediated by trans-translation. Binds to transfer-messenger RNA (tmRNA), required for stable association of tmRNA with ribosomes. tmRNA and SmpB together mimic tRNA shape, replacing the anticodon stem-loop with SmpB. tmRNA is encoded by the ssrA gene; the 2 termini fold to resemble tRNA(Ala) and it encodes a 'tag peptide', a short internal open reading frame. During trans-translation Ala-aminoacylated tmRNA acts like a tRNA, entering the A-site of stalled ribosomes, displacing the stalled mRNA. The ribosome then switches to translate the ORF on the tmRNA; the nascent peptide is terminated with the 'tag peptide' encoded by the tmRNA and targeted for degradation. The ribosome is freed to recommence translation, which seems to be the essential function of trans-translation.</text>
</comment>
<comment type="subcellular location">
    <subcellularLocation>
        <location evidence="1">Cytoplasm</location>
    </subcellularLocation>
    <text evidence="1">The tmRNA-SmpB complex associates with stalled 70S ribosomes.</text>
</comment>
<comment type="similarity">
    <text evidence="1">Belongs to the SmpB family.</text>
</comment>
<protein>
    <recommendedName>
        <fullName evidence="1">SsrA-binding protein</fullName>
    </recommendedName>
    <alternativeName>
        <fullName evidence="1">Small protein B</fullName>
    </alternativeName>
</protein>
<dbReference type="EMBL" id="CP001016">
    <property type="protein sequence ID" value="ACB95493.1"/>
    <property type="molecule type" value="Genomic_DNA"/>
</dbReference>
<dbReference type="RefSeq" id="WP_012384850.1">
    <property type="nucleotide sequence ID" value="NC_010581.1"/>
</dbReference>
<dbReference type="SMR" id="B2IDQ9"/>
<dbReference type="STRING" id="395963.Bind_1869"/>
<dbReference type="KEGG" id="bid:Bind_1869"/>
<dbReference type="eggNOG" id="COG0691">
    <property type="taxonomic scope" value="Bacteria"/>
</dbReference>
<dbReference type="HOGENOM" id="CLU_108953_0_1_5"/>
<dbReference type="OrthoDB" id="9805462at2"/>
<dbReference type="Proteomes" id="UP000001695">
    <property type="component" value="Chromosome"/>
</dbReference>
<dbReference type="GO" id="GO:0005829">
    <property type="term" value="C:cytosol"/>
    <property type="evidence" value="ECO:0007669"/>
    <property type="project" value="TreeGrafter"/>
</dbReference>
<dbReference type="GO" id="GO:0003723">
    <property type="term" value="F:RNA binding"/>
    <property type="evidence" value="ECO:0007669"/>
    <property type="project" value="UniProtKB-UniRule"/>
</dbReference>
<dbReference type="GO" id="GO:0070929">
    <property type="term" value="P:trans-translation"/>
    <property type="evidence" value="ECO:0007669"/>
    <property type="project" value="UniProtKB-UniRule"/>
</dbReference>
<dbReference type="CDD" id="cd09294">
    <property type="entry name" value="SmpB"/>
    <property type="match status" value="1"/>
</dbReference>
<dbReference type="Gene3D" id="2.40.280.10">
    <property type="match status" value="1"/>
</dbReference>
<dbReference type="HAMAP" id="MF_00023">
    <property type="entry name" value="SmpB"/>
    <property type="match status" value="1"/>
</dbReference>
<dbReference type="InterPro" id="IPR023620">
    <property type="entry name" value="SmpB"/>
</dbReference>
<dbReference type="InterPro" id="IPR000037">
    <property type="entry name" value="SsrA-bd_prot"/>
</dbReference>
<dbReference type="InterPro" id="IPR020081">
    <property type="entry name" value="SsrA-bd_prot_CS"/>
</dbReference>
<dbReference type="NCBIfam" id="NF003843">
    <property type="entry name" value="PRK05422.1"/>
    <property type="match status" value="1"/>
</dbReference>
<dbReference type="NCBIfam" id="TIGR00086">
    <property type="entry name" value="smpB"/>
    <property type="match status" value="1"/>
</dbReference>
<dbReference type="PANTHER" id="PTHR30308:SF2">
    <property type="entry name" value="SSRA-BINDING PROTEIN"/>
    <property type="match status" value="1"/>
</dbReference>
<dbReference type="PANTHER" id="PTHR30308">
    <property type="entry name" value="TMRNA-BINDING COMPONENT OF TRANS-TRANSLATION TAGGING COMPLEX"/>
    <property type="match status" value="1"/>
</dbReference>
<dbReference type="Pfam" id="PF01668">
    <property type="entry name" value="SmpB"/>
    <property type="match status" value="1"/>
</dbReference>
<dbReference type="SUPFAM" id="SSF74982">
    <property type="entry name" value="Small protein B (SmpB)"/>
    <property type="match status" value="1"/>
</dbReference>
<dbReference type="PROSITE" id="PS01317">
    <property type="entry name" value="SSRP"/>
    <property type="match status" value="1"/>
</dbReference>
<organism>
    <name type="scientific">Beijerinckia indica subsp. indica (strain ATCC 9039 / DSM 1715 / NCIMB 8712)</name>
    <dbReference type="NCBI Taxonomy" id="395963"/>
    <lineage>
        <taxon>Bacteria</taxon>
        <taxon>Pseudomonadati</taxon>
        <taxon>Pseudomonadota</taxon>
        <taxon>Alphaproteobacteria</taxon>
        <taxon>Hyphomicrobiales</taxon>
        <taxon>Beijerinckiaceae</taxon>
        <taxon>Beijerinckia</taxon>
    </lineage>
</organism>
<feature type="chain" id="PRO_1000090136" description="SsrA-binding protein">
    <location>
        <begin position="1"/>
        <end position="158"/>
    </location>
</feature>
<feature type="region of interest" description="Disordered" evidence="2">
    <location>
        <begin position="133"/>
        <end position="158"/>
    </location>
</feature>
<keyword id="KW-0963">Cytoplasm</keyword>
<keyword id="KW-1185">Reference proteome</keyword>
<keyword id="KW-0694">RNA-binding</keyword>
<evidence type="ECO:0000255" key="1">
    <source>
        <dbReference type="HAMAP-Rule" id="MF_00023"/>
    </source>
</evidence>
<evidence type="ECO:0000256" key="2">
    <source>
        <dbReference type="SAM" id="MobiDB-lite"/>
    </source>
</evidence>
<reference key="1">
    <citation type="journal article" date="2010" name="J. Bacteriol.">
        <title>Complete genome sequence of Beijerinckia indica subsp. indica.</title>
        <authorList>
            <person name="Tamas I."/>
            <person name="Dedysh S.N."/>
            <person name="Liesack W."/>
            <person name="Stott M.B."/>
            <person name="Alam M."/>
            <person name="Murrell J.C."/>
            <person name="Dunfield P.F."/>
        </authorList>
    </citation>
    <scope>NUCLEOTIDE SEQUENCE [LARGE SCALE GENOMIC DNA]</scope>
    <source>
        <strain>ATCC 9039 / DSM 1715 / NCIMB 8712</strain>
    </source>
</reference>
<gene>
    <name evidence="1" type="primary">smpB</name>
    <name type="ordered locus">Bind_1869</name>
</gene>
<proteinExistence type="inferred from homology"/>
<sequence>MAAKKPSAFKIAAENRKARYNYEIGETFEAGLMLTGTEVKSLRTGKATIAESYASVDREGEVFLVNATIPEYLEANRFNHAPKRPRKLLLHGREIAKLSQGVERQGMTIVPLKIYFNDRGRAKIEIALARGKQLHDKRETEKKRDWNKEKGRLLRDKH</sequence>
<accession>B2IDQ9</accession>